<name>ACKA_SALTI</name>
<organism>
    <name type="scientific">Salmonella typhi</name>
    <dbReference type="NCBI Taxonomy" id="90370"/>
    <lineage>
        <taxon>Bacteria</taxon>
        <taxon>Pseudomonadati</taxon>
        <taxon>Pseudomonadota</taxon>
        <taxon>Gammaproteobacteria</taxon>
        <taxon>Enterobacterales</taxon>
        <taxon>Enterobacteriaceae</taxon>
        <taxon>Salmonella</taxon>
    </lineage>
</organism>
<gene>
    <name evidence="1" type="primary">ackA</name>
    <name type="ordered locus">STY2567</name>
    <name type="ordered locus">t0527</name>
</gene>
<protein>
    <recommendedName>
        <fullName evidence="1">Acetate kinase</fullName>
        <ecNumber evidence="1">2.7.2.1</ecNumber>
    </recommendedName>
    <alternativeName>
        <fullName evidence="1">Acetokinase</fullName>
    </alternativeName>
</protein>
<accession>P63412</accession>
<accession>Q8XF99</accession>
<keyword id="KW-0067">ATP-binding</keyword>
<keyword id="KW-0963">Cytoplasm</keyword>
<keyword id="KW-0418">Kinase</keyword>
<keyword id="KW-0460">Magnesium</keyword>
<keyword id="KW-0479">Metal-binding</keyword>
<keyword id="KW-0547">Nucleotide-binding</keyword>
<keyword id="KW-0808">Transferase</keyword>
<reference key="1">
    <citation type="journal article" date="2001" name="Nature">
        <title>Complete genome sequence of a multiple drug resistant Salmonella enterica serovar Typhi CT18.</title>
        <authorList>
            <person name="Parkhill J."/>
            <person name="Dougan G."/>
            <person name="James K.D."/>
            <person name="Thomson N.R."/>
            <person name="Pickard D."/>
            <person name="Wain J."/>
            <person name="Churcher C.M."/>
            <person name="Mungall K.L."/>
            <person name="Bentley S.D."/>
            <person name="Holden M.T.G."/>
            <person name="Sebaihia M."/>
            <person name="Baker S."/>
            <person name="Basham D."/>
            <person name="Brooks K."/>
            <person name="Chillingworth T."/>
            <person name="Connerton P."/>
            <person name="Cronin A."/>
            <person name="Davis P."/>
            <person name="Davies R.M."/>
            <person name="Dowd L."/>
            <person name="White N."/>
            <person name="Farrar J."/>
            <person name="Feltwell T."/>
            <person name="Hamlin N."/>
            <person name="Haque A."/>
            <person name="Hien T.T."/>
            <person name="Holroyd S."/>
            <person name="Jagels K."/>
            <person name="Krogh A."/>
            <person name="Larsen T.S."/>
            <person name="Leather S."/>
            <person name="Moule S."/>
            <person name="O'Gaora P."/>
            <person name="Parry C."/>
            <person name="Quail M.A."/>
            <person name="Rutherford K.M."/>
            <person name="Simmonds M."/>
            <person name="Skelton J."/>
            <person name="Stevens K."/>
            <person name="Whitehead S."/>
            <person name="Barrell B.G."/>
        </authorList>
    </citation>
    <scope>NUCLEOTIDE SEQUENCE [LARGE SCALE GENOMIC DNA]</scope>
    <source>
        <strain>CT18</strain>
    </source>
</reference>
<reference key="2">
    <citation type="journal article" date="2003" name="J. Bacteriol.">
        <title>Comparative genomics of Salmonella enterica serovar Typhi strains Ty2 and CT18.</title>
        <authorList>
            <person name="Deng W."/>
            <person name="Liou S.-R."/>
            <person name="Plunkett G. III"/>
            <person name="Mayhew G.F."/>
            <person name="Rose D.J."/>
            <person name="Burland V."/>
            <person name="Kodoyianni V."/>
            <person name="Schwartz D.C."/>
            <person name="Blattner F.R."/>
        </authorList>
    </citation>
    <scope>NUCLEOTIDE SEQUENCE [LARGE SCALE GENOMIC DNA]</scope>
    <source>
        <strain>ATCC 700931 / Ty2</strain>
    </source>
</reference>
<proteinExistence type="inferred from homology"/>
<dbReference type="EC" id="2.7.2.1" evidence="1"/>
<dbReference type="EMBL" id="AL513382">
    <property type="protein sequence ID" value="CAD07569.1"/>
    <property type="molecule type" value="Genomic_DNA"/>
</dbReference>
<dbReference type="EMBL" id="AE014613">
    <property type="protein sequence ID" value="AAO68233.1"/>
    <property type="molecule type" value="Genomic_DNA"/>
</dbReference>
<dbReference type="RefSeq" id="NP_456879.1">
    <property type="nucleotide sequence ID" value="NC_003198.1"/>
</dbReference>
<dbReference type="RefSeq" id="WP_000095689.1">
    <property type="nucleotide sequence ID" value="NZ_WSUR01000029.1"/>
</dbReference>
<dbReference type="SMR" id="P63412"/>
<dbReference type="STRING" id="220341.gene:17586466"/>
<dbReference type="KEGG" id="stt:t0527"/>
<dbReference type="KEGG" id="sty:STY2567"/>
<dbReference type="PATRIC" id="fig|220341.7.peg.2599"/>
<dbReference type="eggNOG" id="COG0282">
    <property type="taxonomic scope" value="Bacteria"/>
</dbReference>
<dbReference type="HOGENOM" id="CLU_020352_0_0_6"/>
<dbReference type="OMA" id="HKYVSQR"/>
<dbReference type="UniPathway" id="UPA00340">
    <property type="reaction ID" value="UER00458"/>
</dbReference>
<dbReference type="Proteomes" id="UP000000541">
    <property type="component" value="Chromosome"/>
</dbReference>
<dbReference type="Proteomes" id="UP000002670">
    <property type="component" value="Chromosome"/>
</dbReference>
<dbReference type="GO" id="GO:0005829">
    <property type="term" value="C:cytosol"/>
    <property type="evidence" value="ECO:0007669"/>
    <property type="project" value="TreeGrafter"/>
</dbReference>
<dbReference type="GO" id="GO:0008776">
    <property type="term" value="F:acetate kinase activity"/>
    <property type="evidence" value="ECO:0007669"/>
    <property type="project" value="UniProtKB-UniRule"/>
</dbReference>
<dbReference type="GO" id="GO:0005524">
    <property type="term" value="F:ATP binding"/>
    <property type="evidence" value="ECO:0007669"/>
    <property type="project" value="UniProtKB-KW"/>
</dbReference>
<dbReference type="GO" id="GO:0000287">
    <property type="term" value="F:magnesium ion binding"/>
    <property type="evidence" value="ECO:0007669"/>
    <property type="project" value="UniProtKB-UniRule"/>
</dbReference>
<dbReference type="GO" id="GO:0006083">
    <property type="term" value="P:acetate metabolic process"/>
    <property type="evidence" value="ECO:0007669"/>
    <property type="project" value="TreeGrafter"/>
</dbReference>
<dbReference type="GO" id="GO:0006085">
    <property type="term" value="P:acetyl-CoA biosynthetic process"/>
    <property type="evidence" value="ECO:0007669"/>
    <property type="project" value="UniProtKB-UniRule"/>
</dbReference>
<dbReference type="CDD" id="cd24010">
    <property type="entry name" value="ASKHA_NBD_AcK_PK"/>
    <property type="match status" value="1"/>
</dbReference>
<dbReference type="FunFam" id="3.30.420.40:FF:000041">
    <property type="entry name" value="Acetate kinase"/>
    <property type="match status" value="1"/>
</dbReference>
<dbReference type="FunFam" id="3.30.420.40:FF:000042">
    <property type="entry name" value="Acetate kinase"/>
    <property type="match status" value="1"/>
</dbReference>
<dbReference type="Gene3D" id="3.30.420.40">
    <property type="match status" value="2"/>
</dbReference>
<dbReference type="HAMAP" id="MF_00020">
    <property type="entry name" value="Acetate_kinase"/>
    <property type="match status" value="1"/>
</dbReference>
<dbReference type="InterPro" id="IPR004372">
    <property type="entry name" value="Ac/propionate_kinase"/>
</dbReference>
<dbReference type="InterPro" id="IPR000890">
    <property type="entry name" value="Aliphatic_acid_kin_short-chain"/>
</dbReference>
<dbReference type="InterPro" id="IPR023865">
    <property type="entry name" value="Aliphatic_acid_kinase_CS"/>
</dbReference>
<dbReference type="InterPro" id="IPR043129">
    <property type="entry name" value="ATPase_NBD"/>
</dbReference>
<dbReference type="NCBIfam" id="TIGR00016">
    <property type="entry name" value="ackA"/>
    <property type="match status" value="1"/>
</dbReference>
<dbReference type="PANTHER" id="PTHR21060">
    <property type="entry name" value="ACETATE KINASE"/>
    <property type="match status" value="1"/>
</dbReference>
<dbReference type="PANTHER" id="PTHR21060:SF21">
    <property type="entry name" value="ACETATE KINASE"/>
    <property type="match status" value="1"/>
</dbReference>
<dbReference type="Pfam" id="PF00871">
    <property type="entry name" value="Acetate_kinase"/>
    <property type="match status" value="1"/>
</dbReference>
<dbReference type="PIRSF" id="PIRSF000722">
    <property type="entry name" value="Acetate_prop_kin"/>
    <property type="match status" value="1"/>
</dbReference>
<dbReference type="PRINTS" id="PR00471">
    <property type="entry name" value="ACETATEKNASE"/>
</dbReference>
<dbReference type="SUPFAM" id="SSF53067">
    <property type="entry name" value="Actin-like ATPase domain"/>
    <property type="match status" value="2"/>
</dbReference>
<dbReference type="PROSITE" id="PS01075">
    <property type="entry name" value="ACETATE_KINASE_1"/>
    <property type="match status" value="1"/>
</dbReference>
<dbReference type="PROSITE" id="PS01076">
    <property type="entry name" value="ACETATE_KINASE_2"/>
    <property type="match status" value="1"/>
</dbReference>
<sequence length="400" mass="43257">MSSKLVLVLNCGSSSLKFAIIDAVNGDEYLSGLAECFHLPEARIKWKMDGSKQEAALGAGAAHSEALNFIVNTILAQKPELSAQLTAIGHRIVHGGEKYTSSVVIDESVIQGIKDSASFAPLHNPAHLIGIAEALKSFPQLKDKNVAVFDTAFHQTMPEESYLYALPYSLYKEHGVRRYGAHGTSHFYVTQEAAKMLNKPVEELNIITCHLGNGGSVSAIRNGKCVDTSMGLTPLEGLVMGTRSGDIDPAIIFHLHDTLGMSVDQINKMLTKESGLLGLTEVTSDCRYVEDNYATKEDAKRAMDVYCHRLAKYIGSYTALMDGRLDAVVFTGGIGENAAMVRELSLGKLGVLGFEVDHERNLAARFGKSGFINKEGTRPAVVIPTNEELVIAQDASRLTA</sequence>
<evidence type="ECO:0000255" key="1">
    <source>
        <dbReference type="HAMAP-Rule" id="MF_00020"/>
    </source>
</evidence>
<comment type="function">
    <text evidence="1">Catalyzes the formation of acetyl phosphate from acetate and ATP. Can also catalyze the reverse reaction.</text>
</comment>
<comment type="catalytic activity">
    <reaction evidence="1">
        <text>acetate + ATP = acetyl phosphate + ADP</text>
        <dbReference type="Rhea" id="RHEA:11352"/>
        <dbReference type="ChEBI" id="CHEBI:22191"/>
        <dbReference type="ChEBI" id="CHEBI:30089"/>
        <dbReference type="ChEBI" id="CHEBI:30616"/>
        <dbReference type="ChEBI" id="CHEBI:456216"/>
        <dbReference type="EC" id="2.7.2.1"/>
    </reaction>
</comment>
<comment type="cofactor">
    <cofactor evidence="1">
        <name>Mg(2+)</name>
        <dbReference type="ChEBI" id="CHEBI:18420"/>
    </cofactor>
    <cofactor evidence="1">
        <name>Mn(2+)</name>
        <dbReference type="ChEBI" id="CHEBI:29035"/>
    </cofactor>
    <text evidence="1">Mg(2+). Can also accept Mn(2+).</text>
</comment>
<comment type="pathway">
    <text evidence="1">Metabolic intermediate biosynthesis; acetyl-CoA biosynthesis; acetyl-CoA from acetate: step 1/2.</text>
</comment>
<comment type="subunit">
    <text evidence="1">Homodimer.</text>
</comment>
<comment type="subcellular location">
    <subcellularLocation>
        <location evidence="1">Cytoplasm</location>
    </subcellularLocation>
</comment>
<comment type="similarity">
    <text evidence="1">Belongs to the acetokinase family.</text>
</comment>
<feature type="chain" id="PRO_0000107608" description="Acetate kinase">
    <location>
        <begin position="1"/>
        <end position="400"/>
    </location>
</feature>
<feature type="active site" description="Proton donor/acceptor" evidence="1">
    <location>
        <position position="150"/>
    </location>
</feature>
<feature type="binding site" evidence="1">
    <location>
        <position position="10"/>
    </location>
    <ligand>
        <name>Mg(2+)</name>
        <dbReference type="ChEBI" id="CHEBI:18420"/>
    </ligand>
</feature>
<feature type="binding site" evidence="1">
    <location>
        <position position="17"/>
    </location>
    <ligand>
        <name>ATP</name>
        <dbReference type="ChEBI" id="CHEBI:30616"/>
    </ligand>
</feature>
<feature type="binding site" evidence="1">
    <location>
        <position position="91"/>
    </location>
    <ligand>
        <name>substrate</name>
    </ligand>
</feature>
<feature type="binding site" evidence="1">
    <location>
        <begin position="210"/>
        <end position="214"/>
    </location>
    <ligand>
        <name>ATP</name>
        <dbReference type="ChEBI" id="CHEBI:30616"/>
    </ligand>
</feature>
<feature type="binding site" evidence="1">
    <location>
        <begin position="285"/>
        <end position="287"/>
    </location>
    <ligand>
        <name>ATP</name>
        <dbReference type="ChEBI" id="CHEBI:30616"/>
    </ligand>
</feature>
<feature type="binding site" evidence="1">
    <location>
        <begin position="333"/>
        <end position="337"/>
    </location>
    <ligand>
        <name>ATP</name>
        <dbReference type="ChEBI" id="CHEBI:30616"/>
    </ligand>
</feature>
<feature type="binding site" evidence="1">
    <location>
        <position position="387"/>
    </location>
    <ligand>
        <name>Mg(2+)</name>
        <dbReference type="ChEBI" id="CHEBI:18420"/>
    </ligand>
</feature>
<feature type="site" description="Transition state stabilizer" evidence="1">
    <location>
        <position position="182"/>
    </location>
</feature>
<feature type="site" description="Transition state stabilizer" evidence="1">
    <location>
        <position position="243"/>
    </location>
</feature>